<protein>
    <recommendedName>
        <fullName evidence="1">Tryptophan synthase beta chain</fullName>
        <ecNumber evidence="1">4.2.1.20</ecNumber>
    </recommendedName>
</protein>
<sequence>MKMYDLPDKRGHFGPYGGTFVAETLISALDELCKQYEYYRGDAEFQTEFFRELKHYVGRPSPIYHARRWSDHLGGAQILLKREDLNHTGAHKINNTVGQALLARRMGKSRIIAETGAGQHGVASATVAARYGMECVVYMGSEDVKRQATNVYRMKLLGATVIPVDSGSRTLKDALNEAMRDWVTNVGNTYYIIGTVAGPHPYPMMVRDFQAVIGNEARQQMQEEYGRQPDALIACVGGGSNAIGLFYPYIGEENVRMIGVEAAGKGIDTQKHAATLVTGRPGVLHGNRTYLIQDENGQIIETHSISAGLDYPGVGPEHAWLKDCGRAEYVAITDGEALAAFHALCRFEGIMPALESSHALAYAAKLAPTLRKDQLLLVNLSGRGDKDMATVAQQSGISL</sequence>
<reference key="1">
    <citation type="journal article" date="2007" name="Environ. Microbiol.">
        <title>Whole-genome analysis of the ammonia-oxidizing bacterium, Nitrosomonas eutropha C91: implications for niche adaptation.</title>
        <authorList>
            <person name="Stein L.Y."/>
            <person name="Arp D.J."/>
            <person name="Berube P.M."/>
            <person name="Chain P.S."/>
            <person name="Hauser L."/>
            <person name="Jetten M.S."/>
            <person name="Klotz M.G."/>
            <person name="Larimer F.W."/>
            <person name="Norton J.M."/>
            <person name="Op den Camp H.J.M."/>
            <person name="Shin M."/>
            <person name="Wei X."/>
        </authorList>
    </citation>
    <scope>NUCLEOTIDE SEQUENCE [LARGE SCALE GENOMIC DNA]</scope>
    <source>
        <strain>DSM 101675 / C91 / Nm57</strain>
    </source>
</reference>
<evidence type="ECO:0000255" key="1">
    <source>
        <dbReference type="HAMAP-Rule" id="MF_00133"/>
    </source>
</evidence>
<gene>
    <name evidence="1" type="primary">trpB</name>
    <name type="ordered locus">Neut_1152</name>
</gene>
<organism>
    <name type="scientific">Nitrosomonas eutropha (strain DSM 101675 / C91 / Nm57)</name>
    <dbReference type="NCBI Taxonomy" id="335283"/>
    <lineage>
        <taxon>Bacteria</taxon>
        <taxon>Pseudomonadati</taxon>
        <taxon>Pseudomonadota</taxon>
        <taxon>Betaproteobacteria</taxon>
        <taxon>Nitrosomonadales</taxon>
        <taxon>Nitrosomonadaceae</taxon>
        <taxon>Nitrosomonas</taxon>
    </lineage>
</organism>
<dbReference type="EC" id="4.2.1.20" evidence="1"/>
<dbReference type="EMBL" id="CP000450">
    <property type="protein sequence ID" value="ABI59407.1"/>
    <property type="molecule type" value="Genomic_DNA"/>
</dbReference>
<dbReference type="RefSeq" id="WP_011634227.1">
    <property type="nucleotide sequence ID" value="NC_008344.1"/>
</dbReference>
<dbReference type="SMR" id="Q0AGX5"/>
<dbReference type="STRING" id="335283.Neut_1152"/>
<dbReference type="KEGG" id="net:Neut_1152"/>
<dbReference type="eggNOG" id="COG0133">
    <property type="taxonomic scope" value="Bacteria"/>
</dbReference>
<dbReference type="HOGENOM" id="CLU_016734_3_1_4"/>
<dbReference type="UniPathway" id="UPA00035">
    <property type="reaction ID" value="UER00044"/>
</dbReference>
<dbReference type="Proteomes" id="UP000001966">
    <property type="component" value="Chromosome"/>
</dbReference>
<dbReference type="GO" id="GO:0005737">
    <property type="term" value="C:cytoplasm"/>
    <property type="evidence" value="ECO:0007669"/>
    <property type="project" value="TreeGrafter"/>
</dbReference>
<dbReference type="GO" id="GO:0004834">
    <property type="term" value="F:tryptophan synthase activity"/>
    <property type="evidence" value="ECO:0007669"/>
    <property type="project" value="UniProtKB-UniRule"/>
</dbReference>
<dbReference type="CDD" id="cd06446">
    <property type="entry name" value="Trp-synth_B"/>
    <property type="match status" value="1"/>
</dbReference>
<dbReference type="FunFam" id="3.40.50.1100:FF:000001">
    <property type="entry name" value="Tryptophan synthase beta chain"/>
    <property type="match status" value="1"/>
</dbReference>
<dbReference type="FunFam" id="3.40.50.1100:FF:000004">
    <property type="entry name" value="Tryptophan synthase beta chain"/>
    <property type="match status" value="1"/>
</dbReference>
<dbReference type="Gene3D" id="3.40.50.1100">
    <property type="match status" value="2"/>
</dbReference>
<dbReference type="HAMAP" id="MF_00133">
    <property type="entry name" value="Trp_synth_beta"/>
    <property type="match status" value="1"/>
</dbReference>
<dbReference type="InterPro" id="IPR006653">
    <property type="entry name" value="Trp_synth_b_CS"/>
</dbReference>
<dbReference type="InterPro" id="IPR006654">
    <property type="entry name" value="Trp_synth_beta"/>
</dbReference>
<dbReference type="InterPro" id="IPR023026">
    <property type="entry name" value="Trp_synth_beta/beta-like"/>
</dbReference>
<dbReference type="InterPro" id="IPR001926">
    <property type="entry name" value="TrpB-like_PALP"/>
</dbReference>
<dbReference type="InterPro" id="IPR036052">
    <property type="entry name" value="TrpB-like_PALP_sf"/>
</dbReference>
<dbReference type="NCBIfam" id="TIGR00263">
    <property type="entry name" value="trpB"/>
    <property type="match status" value="1"/>
</dbReference>
<dbReference type="PANTHER" id="PTHR48077:SF3">
    <property type="entry name" value="TRYPTOPHAN SYNTHASE"/>
    <property type="match status" value="1"/>
</dbReference>
<dbReference type="PANTHER" id="PTHR48077">
    <property type="entry name" value="TRYPTOPHAN SYNTHASE-RELATED"/>
    <property type="match status" value="1"/>
</dbReference>
<dbReference type="Pfam" id="PF00291">
    <property type="entry name" value="PALP"/>
    <property type="match status" value="1"/>
</dbReference>
<dbReference type="PIRSF" id="PIRSF001413">
    <property type="entry name" value="Trp_syn_beta"/>
    <property type="match status" value="1"/>
</dbReference>
<dbReference type="SUPFAM" id="SSF53686">
    <property type="entry name" value="Tryptophan synthase beta subunit-like PLP-dependent enzymes"/>
    <property type="match status" value="1"/>
</dbReference>
<dbReference type="PROSITE" id="PS00168">
    <property type="entry name" value="TRP_SYNTHASE_BETA"/>
    <property type="match status" value="1"/>
</dbReference>
<keyword id="KW-0028">Amino-acid biosynthesis</keyword>
<keyword id="KW-0057">Aromatic amino acid biosynthesis</keyword>
<keyword id="KW-0456">Lyase</keyword>
<keyword id="KW-0663">Pyridoxal phosphate</keyword>
<keyword id="KW-0822">Tryptophan biosynthesis</keyword>
<feature type="chain" id="PRO_1000018362" description="Tryptophan synthase beta chain">
    <location>
        <begin position="1"/>
        <end position="399"/>
    </location>
</feature>
<feature type="modified residue" description="N6-(pyridoxal phosphate)lysine" evidence="1">
    <location>
        <position position="92"/>
    </location>
</feature>
<comment type="function">
    <text evidence="1">The beta subunit is responsible for the synthesis of L-tryptophan from indole and L-serine.</text>
</comment>
<comment type="catalytic activity">
    <reaction evidence="1">
        <text>(1S,2R)-1-C-(indol-3-yl)glycerol 3-phosphate + L-serine = D-glyceraldehyde 3-phosphate + L-tryptophan + H2O</text>
        <dbReference type="Rhea" id="RHEA:10532"/>
        <dbReference type="ChEBI" id="CHEBI:15377"/>
        <dbReference type="ChEBI" id="CHEBI:33384"/>
        <dbReference type="ChEBI" id="CHEBI:57912"/>
        <dbReference type="ChEBI" id="CHEBI:58866"/>
        <dbReference type="ChEBI" id="CHEBI:59776"/>
        <dbReference type="EC" id="4.2.1.20"/>
    </reaction>
</comment>
<comment type="cofactor">
    <cofactor evidence="1">
        <name>pyridoxal 5'-phosphate</name>
        <dbReference type="ChEBI" id="CHEBI:597326"/>
    </cofactor>
</comment>
<comment type="pathway">
    <text evidence="1">Amino-acid biosynthesis; L-tryptophan biosynthesis; L-tryptophan from chorismate: step 5/5.</text>
</comment>
<comment type="subunit">
    <text evidence="1">Tetramer of two alpha and two beta chains.</text>
</comment>
<comment type="similarity">
    <text evidence="1">Belongs to the TrpB family.</text>
</comment>
<accession>Q0AGX5</accession>
<name>TRPB_NITEC</name>
<proteinExistence type="inferred from homology"/>